<evidence type="ECO:0000255" key="1">
    <source>
        <dbReference type="HAMAP-Rule" id="MF_01366"/>
    </source>
</evidence>
<evidence type="ECO:0000305" key="2"/>
<reference key="1">
    <citation type="submission" date="2006-03" db="EMBL/GenBank/DDBJ databases">
        <title>Complete sequence of Rhodopseudomonas palustris BisB18.</title>
        <authorList>
            <consortium name="US DOE Joint Genome Institute"/>
            <person name="Copeland A."/>
            <person name="Lucas S."/>
            <person name="Lapidus A."/>
            <person name="Barry K."/>
            <person name="Detter J.C."/>
            <person name="Glavina del Rio T."/>
            <person name="Hammon N."/>
            <person name="Israni S."/>
            <person name="Dalin E."/>
            <person name="Tice H."/>
            <person name="Pitluck S."/>
            <person name="Chain P."/>
            <person name="Malfatti S."/>
            <person name="Shin M."/>
            <person name="Vergez L."/>
            <person name="Schmutz J."/>
            <person name="Larimer F."/>
            <person name="Land M."/>
            <person name="Hauser L."/>
            <person name="Pelletier D.A."/>
            <person name="Kyrpides N."/>
            <person name="Anderson I."/>
            <person name="Oda Y."/>
            <person name="Harwood C.S."/>
            <person name="Richardson P."/>
        </authorList>
    </citation>
    <scope>NUCLEOTIDE SEQUENCE [LARGE SCALE GENOMIC DNA]</scope>
    <source>
        <strain>BisB18</strain>
    </source>
</reference>
<dbReference type="EMBL" id="CP000301">
    <property type="protein sequence ID" value="ABD88245.1"/>
    <property type="status" value="ALT_INIT"/>
    <property type="molecule type" value="Genomic_DNA"/>
</dbReference>
<dbReference type="SMR" id="Q214E1"/>
<dbReference type="STRING" id="316056.RPC_2696"/>
<dbReference type="KEGG" id="rpc:RPC_2696"/>
<dbReference type="eggNOG" id="COG0102">
    <property type="taxonomic scope" value="Bacteria"/>
</dbReference>
<dbReference type="HOGENOM" id="CLU_082184_2_0_5"/>
<dbReference type="OrthoDB" id="9801330at2"/>
<dbReference type="GO" id="GO:0022625">
    <property type="term" value="C:cytosolic large ribosomal subunit"/>
    <property type="evidence" value="ECO:0007669"/>
    <property type="project" value="TreeGrafter"/>
</dbReference>
<dbReference type="GO" id="GO:0003729">
    <property type="term" value="F:mRNA binding"/>
    <property type="evidence" value="ECO:0007669"/>
    <property type="project" value="TreeGrafter"/>
</dbReference>
<dbReference type="GO" id="GO:0003735">
    <property type="term" value="F:structural constituent of ribosome"/>
    <property type="evidence" value="ECO:0007669"/>
    <property type="project" value="InterPro"/>
</dbReference>
<dbReference type="GO" id="GO:0017148">
    <property type="term" value="P:negative regulation of translation"/>
    <property type="evidence" value="ECO:0007669"/>
    <property type="project" value="TreeGrafter"/>
</dbReference>
<dbReference type="GO" id="GO:0006412">
    <property type="term" value="P:translation"/>
    <property type="evidence" value="ECO:0007669"/>
    <property type="project" value="UniProtKB-UniRule"/>
</dbReference>
<dbReference type="CDD" id="cd00392">
    <property type="entry name" value="Ribosomal_L13"/>
    <property type="match status" value="1"/>
</dbReference>
<dbReference type="FunFam" id="3.90.1180.10:FF:000001">
    <property type="entry name" value="50S ribosomal protein L13"/>
    <property type="match status" value="1"/>
</dbReference>
<dbReference type="Gene3D" id="3.90.1180.10">
    <property type="entry name" value="Ribosomal protein L13"/>
    <property type="match status" value="1"/>
</dbReference>
<dbReference type="HAMAP" id="MF_01366">
    <property type="entry name" value="Ribosomal_uL13"/>
    <property type="match status" value="1"/>
</dbReference>
<dbReference type="InterPro" id="IPR005822">
    <property type="entry name" value="Ribosomal_uL13"/>
</dbReference>
<dbReference type="InterPro" id="IPR005823">
    <property type="entry name" value="Ribosomal_uL13_bac-type"/>
</dbReference>
<dbReference type="InterPro" id="IPR036899">
    <property type="entry name" value="Ribosomal_uL13_sf"/>
</dbReference>
<dbReference type="NCBIfam" id="TIGR01066">
    <property type="entry name" value="rplM_bact"/>
    <property type="match status" value="1"/>
</dbReference>
<dbReference type="PANTHER" id="PTHR11545:SF2">
    <property type="entry name" value="LARGE RIBOSOMAL SUBUNIT PROTEIN UL13M"/>
    <property type="match status" value="1"/>
</dbReference>
<dbReference type="PANTHER" id="PTHR11545">
    <property type="entry name" value="RIBOSOMAL PROTEIN L13"/>
    <property type="match status" value="1"/>
</dbReference>
<dbReference type="Pfam" id="PF00572">
    <property type="entry name" value="Ribosomal_L13"/>
    <property type="match status" value="1"/>
</dbReference>
<dbReference type="PIRSF" id="PIRSF002181">
    <property type="entry name" value="Ribosomal_L13"/>
    <property type="match status" value="1"/>
</dbReference>
<dbReference type="SUPFAM" id="SSF52161">
    <property type="entry name" value="Ribosomal protein L13"/>
    <property type="match status" value="1"/>
</dbReference>
<accession>Q214E1</accession>
<protein>
    <recommendedName>
        <fullName evidence="1">Large ribosomal subunit protein uL13</fullName>
    </recommendedName>
    <alternativeName>
        <fullName evidence="2">50S ribosomal protein L13</fullName>
    </alternativeName>
</protein>
<comment type="function">
    <text evidence="1">This protein is one of the early assembly proteins of the 50S ribosomal subunit, although it is not seen to bind rRNA by itself. It is important during the early stages of 50S assembly.</text>
</comment>
<comment type="subunit">
    <text evidence="1">Part of the 50S ribosomal subunit.</text>
</comment>
<comment type="similarity">
    <text evidence="1">Belongs to the universal ribosomal protein uL13 family.</text>
</comment>
<comment type="sequence caution" evidence="2">
    <conflict type="erroneous initiation">
        <sequence resource="EMBL-CDS" id="ABD88245"/>
    </conflict>
</comment>
<sequence>MKTFSAKPAEVTKKWIVIDATGLVVGRLATLVANRLRGKHLPTYTPHVDCGDHVIIVNAAKVVLTGRKRENKVYYHHTGFIGGIKERTAKSILEGRFPERVVEKAIERMIPRGPLGRMQMGNLRVYGGPDHPHEAQQPEPLNVAVMNRKNMRAA</sequence>
<name>RL13_RHOPB</name>
<proteinExistence type="inferred from homology"/>
<feature type="chain" id="PRO_0000261785" description="Large ribosomal subunit protein uL13">
    <location>
        <begin position="1"/>
        <end position="154"/>
    </location>
</feature>
<keyword id="KW-0687">Ribonucleoprotein</keyword>
<keyword id="KW-0689">Ribosomal protein</keyword>
<organism>
    <name type="scientific">Rhodopseudomonas palustris (strain BisB18)</name>
    <dbReference type="NCBI Taxonomy" id="316056"/>
    <lineage>
        <taxon>Bacteria</taxon>
        <taxon>Pseudomonadati</taxon>
        <taxon>Pseudomonadota</taxon>
        <taxon>Alphaproteobacteria</taxon>
        <taxon>Hyphomicrobiales</taxon>
        <taxon>Nitrobacteraceae</taxon>
        <taxon>Rhodopseudomonas</taxon>
    </lineage>
</organism>
<gene>
    <name evidence="1" type="primary">rplM</name>
    <name type="ordered locus">RPC_2696</name>
</gene>